<dbReference type="EC" id="7.5.2.7" evidence="1"/>
<dbReference type="EMBL" id="AE009948">
    <property type="protein sequence ID" value="AAM99024.1"/>
    <property type="molecule type" value="Genomic_DNA"/>
</dbReference>
<dbReference type="RefSeq" id="NP_687152.1">
    <property type="nucleotide sequence ID" value="NC_004116.1"/>
</dbReference>
<dbReference type="RefSeq" id="WP_000687230.1">
    <property type="nucleotide sequence ID" value="NC_004116.1"/>
</dbReference>
<dbReference type="SMR" id="Q8E281"/>
<dbReference type="STRING" id="208435.SAG0116"/>
<dbReference type="DNASU" id="1012885"/>
<dbReference type="KEGG" id="sag:SAG0116"/>
<dbReference type="PATRIC" id="fig|208435.3.peg.115"/>
<dbReference type="HOGENOM" id="CLU_000604_92_3_9"/>
<dbReference type="OrthoDB" id="9771863at2"/>
<dbReference type="Proteomes" id="UP000000821">
    <property type="component" value="Chromosome"/>
</dbReference>
<dbReference type="GO" id="GO:0005886">
    <property type="term" value="C:plasma membrane"/>
    <property type="evidence" value="ECO:0007669"/>
    <property type="project" value="UniProtKB-SubCell"/>
</dbReference>
<dbReference type="GO" id="GO:0015611">
    <property type="term" value="F:ABC-type D-ribose transporter activity"/>
    <property type="evidence" value="ECO:0007669"/>
    <property type="project" value="UniProtKB-EC"/>
</dbReference>
<dbReference type="GO" id="GO:0005524">
    <property type="term" value="F:ATP binding"/>
    <property type="evidence" value="ECO:0007669"/>
    <property type="project" value="UniProtKB-KW"/>
</dbReference>
<dbReference type="GO" id="GO:0016887">
    <property type="term" value="F:ATP hydrolysis activity"/>
    <property type="evidence" value="ECO:0007669"/>
    <property type="project" value="InterPro"/>
</dbReference>
<dbReference type="CDD" id="cd03216">
    <property type="entry name" value="ABC_Carb_Monos_I"/>
    <property type="match status" value="1"/>
</dbReference>
<dbReference type="CDD" id="cd03215">
    <property type="entry name" value="ABC_Carb_Monos_II"/>
    <property type="match status" value="1"/>
</dbReference>
<dbReference type="FunFam" id="3.40.50.300:FF:000126">
    <property type="entry name" value="Galactose/methyl galactoside import ATP-binding protein MglA"/>
    <property type="match status" value="1"/>
</dbReference>
<dbReference type="FunFam" id="3.40.50.300:FF:000127">
    <property type="entry name" value="Ribose import ATP-binding protein RbsA"/>
    <property type="match status" value="1"/>
</dbReference>
<dbReference type="Gene3D" id="3.40.50.300">
    <property type="entry name" value="P-loop containing nucleotide triphosphate hydrolases"/>
    <property type="match status" value="2"/>
</dbReference>
<dbReference type="InterPro" id="IPR003593">
    <property type="entry name" value="AAA+_ATPase"/>
</dbReference>
<dbReference type="InterPro" id="IPR050107">
    <property type="entry name" value="ABC_carbohydrate_import_ATPase"/>
</dbReference>
<dbReference type="InterPro" id="IPR003439">
    <property type="entry name" value="ABC_transporter-like_ATP-bd"/>
</dbReference>
<dbReference type="InterPro" id="IPR017871">
    <property type="entry name" value="ABC_transporter-like_CS"/>
</dbReference>
<dbReference type="InterPro" id="IPR027417">
    <property type="entry name" value="P-loop_NTPase"/>
</dbReference>
<dbReference type="PANTHER" id="PTHR43790">
    <property type="entry name" value="CARBOHYDRATE TRANSPORT ATP-BINDING PROTEIN MG119-RELATED"/>
    <property type="match status" value="1"/>
</dbReference>
<dbReference type="PANTHER" id="PTHR43790:SF3">
    <property type="entry name" value="D-ALLOSE IMPORT ATP-BINDING PROTEIN ALSA-RELATED"/>
    <property type="match status" value="1"/>
</dbReference>
<dbReference type="Pfam" id="PF00005">
    <property type="entry name" value="ABC_tran"/>
    <property type="match status" value="2"/>
</dbReference>
<dbReference type="SMART" id="SM00382">
    <property type="entry name" value="AAA"/>
    <property type="match status" value="2"/>
</dbReference>
<dbReference type="SUPFAM" id="SSF52540">
    <property type="entry name" value="P-loop containing nucleoside triphosphate hydrolases"/>
    <property type="match status" value="2"/>
</dbReference>
<dbReference type="PROSITE" id="PS00211">
    <property type="entry name" value="ABC_TRANSPORTER_1"/>
    <property type="match status" value="2"/>
</dbReference>
<dbReference type="PROSITE" id="PS50893">
    <property type="entry name" value="ABC_TRANSPORTER_2"/>
    <property type="match status" value="2"/>
</dbReference>
<dbReference type="PROSITE" id="PS51254">
    <property type="entry name" value="RBSA"/>
    <property type="match status" value="1"/>
</dbReference>
<feature type="chain" id="PRO_0000261107" description="Ribose import ATP-binding protein RbsA">
    <location>
        <begin position="1"/>
        <end position="492"/>
    </location>
</feature>
<feature type="domain" description="ABC transporter 1" evidence="1">
    <location>
        <begin position="3"/>
        <end position="239"/>
    </location>
</feature>
<feature type="domain" description="ABC transporter 2" evidence="1">
    <location>
        <begin position="238"/>
        <end position="492"/>
    </location>
</feature>
<feature type="binding site" evidence="1">
    <location>
        <begin position="35"/>
        <end position="42"/>
    </location>
    <ligand>
        <name>ATP</name>
        <dbReference type="ChEBI" id="CHEBI:30616"/>
    </ligand>
</feature>
<protein>
    <recommendedName>
        <fullName evidence="1">Ribose import ATP-binding protein RbsA</fullName>
        <ecNumber evidence="1">7.5.2.7</ecNumber>
    </recommendedName>
</protein>
<organism>
    <name type="scientific">Streptococcus agalactiae serotype V (strain ATCC BAA-611 / 2603 V/R)</name>
    <dbReference type="NCBI Taxonomy" id="208435"/>
    <lineage>
        <taxon>Bacteria</taxon>
        <taxon>Bacillati</taxon>
        <taxon>Bacillota</taxon>
        <taxon>Bacilli</taxon>
        <taxon>Lactobacillales</taxon>
        <taxon>Streptococcaceae</taxon>
        <taxon>Streptococcus</taxon>
    </lineage>
</organism>
<keyword id="KW-0067">ATP-binding</keyword>
<keyword id="KW-1003">Cell membrane</keyword>
<keyword id="KW-0472">Membrane</keyword>
<keyword id="KW-0547">Nucleotide-binding</keyword>
<keyword id="KW-1185">Reference proteome</keyword>
<keyword id="KW-0677">Repeat</keyword>
<keyword id="KW-0762">Sugar transport</keyword>
<keyword id="KW-1278">Translocase</keyword>
<keyword id="KW-0813">Transport</keyword>
<name>RBSA_STRA5</name>
<comment type="function">
    <text evidence="1">Part of the ABC transporter complex RbsABC involved in ribose import. Responsible for energy coupling to the transport system.</text>
</comment>
<comment type="catalytic activity">
    <reaction evidence="1">
        <text>D-ribose(out) + ATP + H2O = D-ribose(in) + ADP + phosphate + H(+)</text>
        <dbReference type="Rhea" id="RHEA:29903"/>
        <dbReference type="ChEBI" id="CHEBI:15377"/>
        <dbReference type="ChEBI" id="CHEBI:15378"/>
        <dbReference type="ChEBI" id="CHEBI:30616"/>
        <dbReference type="ChEBI" id="CHEBI:43474"/>
        <dbReference type="ChEBI" id="CHEBI:47013"/>
        <dbReference type="ChEBI" id="CHEBI:456216"/>
        <dbReference type="EC" id="7.5.2.7"/>
    </reaction>
</comment>
<comment type="subunit">
    <text evidence="1">The complex is composed of an ATP-binding protein (RbsA), two transmembrane proteins (RbsC) and a solute-binding protein (RbsB).</text>
</comment>
<comment type="subcellular location">
    <subcellularLocation>
        <location evidence="1">Cell membrane</location>
        <topology evidence="1">Peripheral membrane protein</topology>
    </subcellularLocation>
</comment>
<comment type="similarity">
    <text evidence="1">Belongs to the ABC transporter superfamily. Ribose importer (TC 3.A.1.2.1) family.</text>
</comment>
<accession>Q8E281</accession>
<sequence>MKIDMRNISKSFGTNKVLEKIDLELQSGQIHALMGENGAGKSTLMNILTGLFPASTGTIYIDGEERTFSNPQEAEEFGISFIHQEMNTWPEMTVLENLFLGREIKTTFGLLNQKLMRQKALETFKRLGVTIPLDIPIGNLSVGQQQMIEIAKSLLNQLSILVMDEPTAALTDRETENLFRVIRGLKQEGVGVVYISHRMEEIFKITDFVTVMRDGVIVDTKETSLTNSDELVKKMVGRKLEDYYPEKHSEIGPVAFEVSNLCGDNFEDVSFYVRKGEILGFSGLMGAGRTEVMRTIFGIDKKKSGKVKIDDQEITITTPSQAIKQGIGFLTENRKDEGLILDFNIKDNMTLPSTKDFSKHGFFDEKTSTTFVQQLINRLYIKSGRPDLEVGNLSGGNQQKVVLAKWIGIAPKVLILDEPTRGVDVGAKREIYQLMNELADRGVPIVMVSSDLPEILGVSDRIMVMHEGRISGELSRKEADQEKVMQLATGGK</sequence>
<proteinExistence type="inferred from homology"/>
<gene>
    <name evidence="1" type="primary">rbsA</name>
    <name type="ordered locus">SAG0116</name>
</gene>
<evidence type="ECO:0000255" key="1">
    <source>
        <dbReference type="HAMAP-Rule" id="MF_01716"/>
    </source>
</evidence>
<reference key="1">
    <citation type="journal article" date="2002" name="Proc. Natl. Acad. Sci. U.S.A.">
        <title>Complete genome sequence and comparative genomic analysis of an emerging human pathogen, serotype V Streptococcus agalactiae.</title>
        <authorList>
            <person name="Tettelin H."/>
            <person name="Masignani V."/>
            <person name="Cieslewicz M.J."/>
            <person name="Eisen J.A."/>
            <person name="Peterson S.N."/>
            <person name="Wessels M.R."/>
            <person name="Paulsen I.T."/>
            <person name="Nelson K.E."/>
            <person name="Margarit I."/>
            <person name="Read T.D."/>
            <person name="Madoff L.C."/>
            <person name="Wolf A.M."/>
            <person name="Beanan M.J."/>
            <person name="Brinkac L.M."/>
            <person name="Daugherty S.C."/>
            <person name="DeBoy R.T."/>
            <person name="Durkin A.S."/>
            <person name="Kolonay J.F."/>
            <person name="Madupu R."/>
            <person name="Lewis M.R."/>
            <person name="Radune D."/>
            <person name="Fedorova N.B."/>
            <person name="Scanlan D."/>
            <person name="Khouri H.M."/>
            <person name="Mulligan S."/>
            <person name="Carty H.A."/>
            <person name="Cline R.T."/>
            <person name="Van Aken S.E."/>
            <person name="Gill J."/>
            <person name="Scarselli M."/>
            <person name="Mora M."/>
            <person name="Iacobini E.T."/>
            <person name="Brettoni C."/>
            <person name="Galli G."/>
            <person name="Mariani M."/>
            <person name="Vegni F."/>
            <person name="Maione D."/>
            <person name="Rinaudo D."/>
            <person name="Rappuoli R."/>
            <person name="Telford J.L."/>
            <person name="Kasper D.L."/>
            <person name="Grandi G."/>
            <person name="Fraser C.M."/>
        </authorList>
    </citation>
    <scope>NUCLEOTIDE SEQUENCE [LARGE SCALE GENOMIC DNA]</scope>
    <source>
        <strain>ATCC BAA-611 / 2603 V/R</strain>
    </source>
</reference>